<protein>
    <recommendedName>
        <fullName evidence="1">Urease subunit gamma</fullName>
        <ecNumber evidence="1">3.5.1.5</ecNumber>
    </recommendedName>
    <alternativeName>
        <fullName evidence="1">Urea amidohydrolase subunit gamma</fullName>
    </alternativeName>
</protein>
<dbReference type="EC" id="3.5.1.5" evidence="1"/>
<dbReference type="EMBL" id="CU468230">
    <property type="protein sequence ID" value="CAP01690.1"/>
    <property type="molecule type" value="Genomic_DNA"/>
</dbReference>
<dbReference type="SMR" id="B0VSC2"/>
<dbReference type="KEGG" id="abm:ABSDF2377"/>
<dbReference type="HOGENOM" id="CLU_145825_1_0_6"/>
<dbReference type="UniPathway" id="UPA00258">
    <property type="reaction ID" value="UER00370"/>
</dbReference>
<dbReference type="Proteomes" id="UP000001741">
    <property type="component" value="Chromosome"/>
</dbReference>
<dbReference type="GO" id="GO:0005737">
    <property type="term" value="C:cytoplasm"/>
    <property type="evidence" value="ECO:0007669"/>
    <property type="project" value="UniProtKB-SubCell"/>
</dbReference>
<dbReference type="GO" id="GO:0016151">
    <property type="term" value="F:nickel cation binding"/>
    <property type="evidence" value="ECO:0007669"/>
    <property type="project" value="InterPro"/>
</dbReference>
<dbReference type="GO" id="GO:0009039">
    <property type="term" value="F:urease activity"/>
    <property type="evidence" value="ECO:0007669"/>
    <property type="project" value="UniProtKB-UniRule"/>
</dbReference>
<dbReference type="GO" id="GO:0043419">
    <property type="term" value="P:urea catabolic process"/>
    <property type="evidence" value="ECO:0007669"/>
    <property type="project" value="UniProtKB-UniRule"/>
</dbReference>
<dbReference type="CDD" id="cd00390">
    <property type="entry name" value="Urease_gamma"/>
    <property type="match status" value="1"/>
</dbReference>
<dbReference type="Gene3D" id="3.30.280.10">
    <property type="entry name" value="Urease, gamma-like subunit"/>
    <property type="match status" value="1"/>
</dbReference>
<dbReference type="HAMAP" id="MF_00739">
    <property type="entry name" value="Urease_gamma"/>
    <property type="match status" value="1"/>
</dbReference>
<dbReference type="InterPro" id="IPR012010">
    <property type="entry name" value="Urease_gamma"/>
</dbReference>
<dbReference type="InterPro" id="IPR002026">
    <property type="entry name" value="Urease_gamma/gamma-beta_su"/>
</dbReference>
<dbReference type="InterPro" id="IPR036463">
    <property type="entry name" value="Urease_gamma_sf"/>
</dbReference>
<dbReference type="InterPro" id="IPR050069">
    <property type="entry name" value="Urease_subunit"/>
</dbReference>
<dbReference type="NCBIfam" id="NF009712">
    <property type="entry name" value="PRK13241.1"/>
    <property type="match status" value="1"/>
</dbReference>
<dbReference type="NCBIfam" id="TIGR00193">
    <property type="entry name" value="urease_gam"/>
    <property type="match status" value="1"/>
</dbReference>
<dbReference type="PANTHER" id="PTHR33569">
    <property type="entry name" value="UREASE"/>
    <property type="match status" value="1"/>
</dbReference>
<dbReference type="PANTHER" id="PTHR33569:SF1">
    <property type="entry name" value="UREASE"/>
    <property type="match status" value="1"/>
</dbReference>
<dbReference type="Pfam" id="PF00547">
    <property type="entry name" value="Urease_gamma"/>
    <property type="match status" value="1"/>
</dbReference>
<dbReference type="PIRSF" id="PIRSF001223">
    <property type="entry name" value="Urease_gamma"/>
    <property type="match status" value="1"/>
</dbReference>
<dbReference type="SUPFAM" id="SSF54111">
    <property type="entry name" value="Urease, gamma-subunit"/>
    <property type="match status" value="1"/>
</dbReference>
<gene>
    <name evidence="1" type="primary">ureA</name>
    <name type="ordered locus">ABSDF2377</name>
</gene>
<keyword id="KW-0963">Cytoplasm</keyword>
<keyword id="KW-0378">Hydrolase</keyword>
<evidence type="ECO:0000255" key="1">
    <source>
        <dbReference type="HAMAP-Rule" id="MF_00739"/>
    </source>
</evidence>
<comment type="catalytic activity">
    <reaction evidence="1">
        <text>urea + 2 H2O + H(+) = hydrogencarbonate + 2 NH4(+)</text>
        <dbReference type="Rhea" id="RHEA:20557"/>
        <dbReference type="ChEBI" id="CHEBI:15377"/>
        <dbReference type="ChEBI" id="CHEBI:15378"/>
        <dbReference type="ChEBI" id="CHEBI:16199"/>
        <dbReference type="ChEBI" id="CHEBI:17544"/>
        <dbReference type="ChEBI" id="CHEBI:28938"/>
        <dbReference type="EC" id="3.5.1.5"/>
    </reaction>
</comment>
<comment type="pathway">
    <text evidence="1">Nitrogen metabolism; urea degradation; CO(2) and NH(3) from urea (urease route): step 1/1.</text>
</comment>
<comment type="subunit">
    <text evidence="1">Heterotrimer of UreA (gamma), UreB (beta) and UreC (alpha) subunits. Three heterotrimers associate to form the active enzyme.</text>
</comment>
<comment type="subcellular location">
    <subcellularLocation>
        <location evidence="1">Cytoplasm</location>
    </subcellularLocation>
</comment>
<comment type="similarity">
    <text evidence="1">Belongs to the urease gamma subunit family.</text>
</comment>
<sequence length="100" mass="10967">MELNPTEKDKLLIFTAGLVAERRKARGLKLNYPEAVAFISAALLEGARDGMTVSELMHFGTTLLKRKDVMDGVPEMIAEVQVEATFPDGSKLVTVHQPIV</sequence>
<proteinExistence type="inferred from homology"/>
<organism>
    <name type="scientific">Acinetobacter baumannii (strain SDF)</name>
    <dbReference type="NCBI Taxonomy" id="509170"/>
    <lineage>
        <taxon>Bacteria</taxon>
        <taxon>Pseudomonadati</taxon>
        <taxon>Pseudomonadota</taxon>
        <taxon>Gammaproteobacteria</taxon>
        <taxon>Moraxellales</taxon>
        <taxon>Moraxellaceae</taxon>
        <taxon>Acinetobacter</taxon>
        <taxon>Acinetobacter calcoaceticus/baumannii complex</taxon>
    </lineage>
</organism>
<name>URE3_ACIBS</name>
<reference key="1">
    <citation type="journal article" date="2008" name="PLoS ONE">
        <title>Comparative analysis of Acinetobacters: three genomes for three lifestyles.</title>
        <authorList>
            <person name="Vallenet D."/>
            <person name="Nordmann P."/>
            <person name="Barbe V."/>
            <person name="Poirel L."/>
            <person name="Mangenot S."/>
            <person name="Bataille E."/>
            <person name="Dossat C."/>
            <person name="Gas S."/>
            <person name="Kreimeyer A."/>
            <person name="Lenoble P."/>
            <person name="Oztas S."/>
            <person name="Poulain J."/>
            <person name="Segurens B."/>
            <person name="Robert C."/>
            <person name="Abergel C."/>
            <person name="Claverie J.-M."/>
            <person name="Raoult D."/>
            <person name="Medigue C."/>
            <person name="Weissenbach J."/>
            <person name="Cruveiller S."/>
        </authorList>
    </citation>
    <scope>NUCLEOTIDE SEQUENCE [LARGE SCALE GENOMIC DNA]</scope>
    <source>
        <strain>SDF</strain>
    </source>
</reference>
<accession>B0VSC2</accession>
<feature type="chain" id="PRO_1000199845" description="Urease subunit gamma">
    <location>
        <begin position="1"/>
        <end position="100"/>
    </location>
</feature>